<proteinExistence type="inferred from homology"/>
<dbReference type="EMBL" id="AE014295">
    <property type="protein sequence ID" value="AAN24463.1"/>
    <property type="molecule type" value="Genomic_DNA"/>
</dbReference>
<dbReference type="RefSeq" id="NP_695827.1">
    <property type="nucleotide sequence ID" value="NC_004307.2"/>
</dbReference>
<dbReference type="RefSeq" id="WP_007051768.1">
    <property type="nucleotide sequence ID" value="NC_004307.2"/>
</dbReference>
<dbReference type="SMR" id="Q8G6J9"/>
<dbReference type="STRING" id="206672.BL0642"/>
<dbReference type="EnsemblBacteria" id="AAN24463">
    <property type="protein sequence ID" value="AAN24463"/>
    <property type="gene ID" value="BL0642"/>
</dbReference>
<dbReference type="GeneID" id="69579149"/>
<dbReference type="KEGG" id="blo:BL0642"/>
<dbReference type="PATRIC" id="fig|206672.9.peg.1372"/>
<dbReference type="HOGENOM" id="CLU_129938_2_1_11"/>
<dbReference type="OrthoDB" id="9804832at2"/>
<dbReference type="Proteomes" id="UP000000439">
    <property type="component" value="Chromosome"/>
</dbReference>
<dbReference type="GO" id="GO:1990904">
    <property type="term" value="C:ribonucleoprotein complex"/>
    <property type="evidence" value="ECO:0007669"/>
    <property type="project" value="UniProtKB-KW"/>
</dbReference>
<dbReference type="GO" id="GO:0005840">
    <property type="term" value="C:ribosome"/>
    <property type="evidence" value="ECO:0007669"/>
    <property type="project" value="UniProtKB-KW"/>
</dbReference>
<dbReference type="GO" id="GO:0003735">
    <property type="term" value="F:structural constituent of ribosome"/>
    <property type="evidence" value="ECO:0007669"/>
    <property type="project" value="InterPro"/>
</dbReference>
<dbReference type="GO" id="GO:0006412">
    <property type="term" value="P:translation"/>
    <property type="evidence" value="ECO:0007669"/>
    <property type="project" value="UniProtKB-UniRule"/>
</dbReference>
<dbReference type="FunFam" id="1.10.287.3980:FF:000001">
    <property type="entry name" value="Mitochondrial ribosomal protein L34"/>
    <property type="match status" value="1"/>
</dbReference>
<dbReference type="Gene3D" id="1.10.287.3980">
    <property type="match status" value="1"/>
</dbReference>
<dbReference type="HAMAP" id="MF_00391">
    <property type="entry name" value="Ribosomal_bL34"/>
    <property type="match status" value="1"/>
</dbReference>
<dbReference type="InterPro" id="IPR000271">
    <property type="entry name" value="Ribosomal_bL34"/>
</dbReference>
<dbReference type="InterPro" id="IPR020939">
    <property type="entry name" value="Ribosomal_bL34_CS"/>
</dbReference>
<dbReference type="NCBIfam" id="TIGR01030">
    <property type="entry name" value="rpmH_bact"/>
    <property type="match status" value="1"/>
</dbReference>
<dbReference type="PANTHER" id="PTHR14503:SF4">
    <property type="entry name" value="LARGE RIBOSOMAL SUBUNIT PROTEIN BL34M"/>
    <property type="match status" value="1"/>
</dbReference>
<dbReference type="PANTHER" id="PTHR14503">
    <property type="entry name" value="MITOCHONDRIAL RIBOSOMAL PROTEIN 34 FAMILY MEMBER"/>
    <property type="match status" value="1"/>
</dbReference>
<dbReference type="Pfam" id="PF00468">
    <property type="entry name" value="Ribosomal_L34"/>
    <property type="match status" value="1"/>
</dbReference>
<dbReference type="PROSITE" id="PS00784">
    <property type="entry name" value="RIBOSOMAL_L34"/>
    <property type="match status" value="1"/>
</dbReference>
<gene>
    <name evidence="1" type="primary">rpmH</name>
    <name type="ordered locus">BL0642</name>
</gene>
<feature type="chain" id="PRO_0000187345" description="Large ribosomal subunit protein bL34">
    <location>
        <begin position="1"/>
        <end position="44"/>
    </location>
</feature>
<protein>
    <recommendedName>
        <fullName evidence="1">Large ribosomal subunit protein bL34</fullName>
    </recommendedName>
    <alternativeName>
        <fullName evidence="2">50S ribosomal protein L34</fullName>
    </alternativeName>
</protein>
<organism>
    <name type="scientific">Bifidobacterium longum (strain NCC 2705)</name>
    <dbReference type="NCBI Taxonomy" id="206672"/>
    <lineage>
        <taxon>Bacteria</taxon>
        <taxon>Bacillati</taxon>
        <taxon>Actinomycetota</taxon>
        <taxon>Actinomycetes</taxon>
        <taxon>Bifidobacteriales</taxon>
        <taxon>Bifidobacteriaceae</taxon>
        <taxon>Bifidobacterium</taxon>
    </lineage>
</organism>
<accession>Q8G6J9</accession>
<comment type="similarity">
    <text evidence="1">Belongs to the bacterial ribosomal protein bL34 family.</text>
</comment>
<sequence>MKRTFQPNNRRRHMKHGFRLRMRTRSGRAVINRRRAKGRKTLSA</sequence>
<evidence type="ECO:0000255" key="1">
    <source>
        <dbReference type="HAMAP-Rule" id="MF_00391"/>
    </source>
</evidence>
<evidence type="ECO:0000305" key="2"/>
<reference key="1">
    <citation type="journal article" date="2002" name="Proc. Natl. Acad. Sci. U.S.A.">
        <title>The genome sequence of Bifidobacterium longum reflects its adaptation to the human gastrointestinal tract.</title>
        <authorList>
            <person name="Schell M.A."/>
            <person name="Karmirantzou M."/>
            <person name="Snel B."/>
            <person name="Vilanova D."/>
            <person name="Berger B."/>
            <person name="Pessi G."/>
            <person name="Zwahlen M.-C."/>
            <person name="Desiere F."/>
            <person name="Bork P."/>
            <person name="Delley M."/>
            <person name="Pridmore R.D."/>
            <person name="Arigoni F."/>
        </authorList>
    </citation>
    <scope>NUCLEOTIDE SEQUENCE [LARGE SCALE GENOMIC DNA]</scope>
    <source>
        <strain>NCC 2705</strain>
    </source>
</reference>
<name>RL34_BIFLO</name>
<keyword id="KW-1185">Reference proteome</keyword>
<keyword id="KW-0687">Ribonucleoprotein</keyword>
<keyword id="KW-0689">Ribosomal protein</keyword>